<sequence length="347" mass="38436">MGENMEREMLRPKTIAMDQNSASARSNPEREIKTGRLEPASNSAPTMAIDLQAVTMIYRDKTVVDSLSFGVRAGECFGLLGPNGAGKSTITRMLLGMATPSAGKISVLGLPVPGKARLARASIGVVSQFDNLDMEFTVRENLLVFGRYFQMSTRAIEKLIPSLLEFAQLEAKADVRVSDLSGGMKRRLTLARALVNDPQLLILDEPTTGLDPPARHQIWERLRSLLIRGKTILLTTHMMDEAERMCDRLCVLEGGRMIAEGPPLSLIEDIIGCPVIEVYGGNPDELSLIVRPHVDRIETSGETLFCYTVNSDQVRAKLREFPSLRLLERPANLEDVFLRLTGREMEK</sequence>
<feature type="chain" id="PRO_0000092637" description="Nod factor export ATP-binding protein I">
    <location>
        <begin position="1"/>
        <end position="347"/>
    </location>
</feature>
<feature type="domain" description="ABC transporter" evidence="1">
    <location>
        <begin position="49"/>
        <end position="279"/>
    </location>
</feature>
<feature type="region of interest" description="Disordered" evidence="2">
    <location>
        <begin position="1"/>
        <end position="32"/>
    </location>
</feature>
<feature type="compositionally biased region" description="Basic and acidic residues" evidence="2">
    <location>
        <begin position="1"/>
        <end position="11"/>
    </location>
</feature>
<feature type="compositionally biased region" description="Polar residues" evidence="2">
    <location>
        <begin position="17"/>
        <end position="26"/>
    </location>
</feature>
<feature type="binding site" evidence="1">
    <location>
        <begin position="81"/>
        <end position="88"/>
    </location>
    <ligand>
        <name>ATP</name>
        <dbReference type="ChEBI" id="CHEBI:30616"/>
    </ligand>
</feature>
<keyword id="KW-0067">ATP-binding</keyword>
<keyword id="KW-0997">Cell inner membrane</keyword>
<keyword id="KW-1003">Cell membrane</keyword>
<keyword id="KW-0472">Membrane</keyword>
<keyword id="KW-0536">Nodulation</keyword>
<keyword id="KW-0547">Nucleotide-binding</keyword>
<keyword id="KW-1278">Translocase</keyword>
<keyword id="KW-0813">Transport</keyword>
<accession>P50332</accession>
<comment type="function">
    <text evidence="1">Part of the ABC transporter complex NodIJ involved in the export of the nodulation factors (Nod factors), the bacterial signal molecules that induce symbiosis and subsequent nodulation induction. Nod factors are LCO (lipo-chitin oligosaccharide), a modified beta-1,4-linked N-acetylglucosamine oligosaccharide. This subunit is responsible for energy coupling to the transport system.</text>
</comment>
<comment type="subunit">
    <text evidence="1">The complex is composed of two ATP-binding proteins (NodI) and two transmembrane proteins (NodJ).</text>
</comment>
<comment type="subcellular location">
    <subcellularLocation>
        <location evidence="1">Cell inner membrane</location>
        <topology evidence="1">Peripheral membrane protein</topology>
    </subcellularLocation>
</comment>
<comment type="similarity">
    <text evidence="1">Belongs to the ABC transporter superfamily. Lipooligosaccharide exporter (TC 3.A.1.102) family.</text>
</comment>
<dbReference type="EC" id="7.6.2.-" evidence="1"/>
<dbReference type="EMBL" id="X87578">
    <property type="protein sequence ID" value="CAA60881.1"/>
    <property type="molecule type" value="Genomic_DNA"/>
</dbReference>
<dbReference type="SMR" id="P50332"/>
<dbReference type="TCDB" id="3.A.1.102.1">
    <property type="family name" value="the atp-binding cassette (abc) superfamily"/>
</dbReference>
<dbReference type="GO" id="GO:0005886">
    <property type="term" value="C:plasma membrane"/>
    <property type="evidence" value="ECO:0007669"/>
    <property type="project" value="UniProtKB-SubCell"/>
</dbReference>
<dbReference type="GO" id="GO:0005524">
    <property type="term" value="F:ATP binding"/>
    <property type="evidence" value="ECO:0007669"/>
    <property type="project" value="UniProtKB-KW"/>
</dbReference>
<dbReference type="GO" id="GO:0016887">
    <property type="term" value="F:ATP hydrolysis activity"/>
    <property type="evidence" value="ECO:0007669"/>
    <property type="project" value="InterPro"/>
</dbReference>
<dbReference type="GO" id="GO:0022857">
    <property type="term" value="F:transmembrane transporter activity"/>
    <property type="evidence" value="ECO:0007669"/>
    <property type="project" value="InterPro"/>
</dbReference>
<dbReference type="CDD" id="cd03263">
    <property type="entry name" value="ABC_subfamily_A"/>
    <property type="match status" value="1"/>
</dbReference>
<dbReference type="FunFam" id="3.40.50.300:FF:000589">
    <property type="entry name" value="ABC transporter, ATP-binding subunit"/>
    <property type="match status" value="1"/>
</dbReference>
<dbReference type="Gene3D" id="3.40.50.300">
    <property type="entry name" value="P-loop containing nucleotide triphosphate hydrolases"/>
    <property type="match status" value="1"/>
</dbReference>
<dbReference type="InterPro" id="IPR003593">
    <property type="entry name" value="AAA+_ATPase"/>
</dbReference>
<dbReference type="InterPro" id="IPR003439">
    <property type="entry name" value="ABC_transporter-like_ATP-bd"/>
</dbReference>
<dbReference type="InterPro" id="IPR017871">
    <property type="entry name" value="ABC_transporter-like_CS"/>
</dbReference>
<dbReference type="InterPro" id="IPR050763">
    <property type="entry name" value="ABC_transporter_ATP-binding"/>
</dbReference>
<dbReference type="InterPro" id="IPR005978">
    <property type="entry name" value="ABC_transptNodI"/>
</dbReference>
<dbReference type="InterPro" id="IPR027417">
    <property type="entry name" value="P-loop_NTPase"/>
</dbReference>
<dbReference type="NCBIfam" id="TIGR01288">
    <property type="entry name" value="nodI"/>
    <property type="match status" value="1"/>
</dbReference>
<dbReference type="NCBIfam" id="NF010059">
    <property type="entry name" value="PRK13536.1"/>
    <property type="match status" value="1"/>
</dbReference>
<dbReference type="PANTHER" id="PTHR42711">
    <property type="entry name" value="ABC TRANSPORTER ATP-BINDING PROTEIN"/>
    <property type="match status" value="1"/>
</dbReference>
<dbReference type="PANTHER" id="PTHR42711:SF5">
    <property type="entry name" value="ABC TRANSPORTER ATP-BINDING PROTEIN NATA"/>
    <property type="match status" value="1"/>
</dbReference>
<dbReference type="Pfam" id="PF00005">
    <property type="entry name" value="ABC_tran"/>
    <property type="match status" value="1"/>
</dbReference>
<dbReference type="SMART" id="SM00382">
    <property type="entry name" value="AAA"/>
    <property type="match status" value="1"/>
</dbReference>
<dbReference type="SUPFAM" id="SSF52540">
    <property type="entry name" value="P-loop containing nucleoside triphosphate hydrolases"/>
    <property type="match status" value="1"/>
</dbReference>
<dbReference type="PROSITE" id="PS00211">
    <property type="entry name" value="ABC_TRANSPORTER_1"/>
    <property type="match status" value="1"/>
</dbReference>
<dbReference type="PROSITE" id="PS50893">
    <property type="entry name" value="ABC_TRANSPORTER_2"/>
    <property type="match status" value="1"/>
</dbReference>
<dbReference type="PROSITE" id="PS51240">
    <property type="entry name" value="NODI"/>
    <property type="match status" value="1"/>
</dbReference>
<proteinExistence type="inferred from homology"/>
<reference key="1">
    <citation type="journal article" date="1999" name="FEMS Microbiol. Lett.">
        <title>Identification of nodulation promoter (nod-box) regions of Rhizobium galegae.</title>
        <authorList>
            <person name="Suominen L."/>
            <person name="Paulin L."/>
            <person name="Saano A."/>
            <person name="Saren A.-M."/>
            <person name="Tas E."/>
            <person name="Lindstroem K."/>
        </authorList>
    </citation>
    <scope>NUCLEOTIDE SEQUENCE [GENOMIC DNA]</scope>
    <source>
        <strain>HAMBI 1174</strain>
    </source>
</reference>
<gene>
    <name evidence="1" type="primary">nodI</name>
</gene>
<organism>
    <name type="scientific">Neorhizobium galegae</name>
    <name type="common">Rhizobium galegae</name>
    <dbReference type="NCBI Taxonomy" id="399"/>
    <lineage>
        <taxon>Bacteria</taxon>
        <taxon>Pseudomonadati</taxon>
        <taxon>Pseudomonadota</taxon>
        <taxon>Alphaproteobacteria</taxon>
        <taxon>Hyphomicrobiales</taxon>
        <taxon>Rhizobiaceae</taxon>
        <taxon>Rhizobium/Agrobacterium group</taxon>
        <taxon>Neorhizobium</taxon>
    </lineage>
</organism>
<protein>
    <recommendedName>
        <fullName evidence="1">Nod factor export ATP-binding protein I</fullName>
        <ecNumber evidence="1">7.6.2.-</ecNumber>
    </recommendedName>
    <alternativeName>
        <fullName evidence="1">Nodulation ATP-binding protein I</fullName>
    </alternativeName>
</protein>
<name>NODI_NEOGA</name>
<evidence type="ECO:0000255" key="1">
    <source>
        <dbReference type="HAMAP-Rule" id="MF_01704"/>
    </source>
</evidence>
<evidence type="ECO:0000256" key="2">
    <source>
        <dbReference type="SAM" id="MobiDB-lite"/>
    </source>
</evidence>